<keyword id="KW-0963">Cytoplasm</keyword>
<keyword id="KW-0238">DNA-binding</keyword>
<keyword id="KW-0804">Transcription</keyword>
<keyword id="KW-0805">Transcription regulation</keyword>
<gene>
    <name type="ordered locus">Meso_3192</name>
</gene>
<accession>Q11DG1</accession>
<feature type="chain" id="PRO_0000257078" description="Probable transcriptional regulatory protein Meso_3192">
    <location>
        <begin position="1"/>
        <end position="249"/>
    </location>
</feature>
<sequence length="249" mass="26806">MAGHSQFKNIMHRKGRQDAVKSKMFSKLAREITVAAKAGLPDPAMNPRLRLAVQNARAQSMPKDNIERAIKKAQGNDAETYEEIRYEGYAPGGVAVIVEALTDNRNRTASNVRAAFTKAGGALGETGSVSFMFDRVGEIVYPASAGDADKVMEAAIEAGAEDVQSDENGHVIICAFEDIGEVTSALEEALGEAESVKTVWRPQTSTPVDEERAQSILKLIAVLEDDDDVQNVYANFEVDDATMAKLSAA</sequence>
<name>Y3192_CHESB</name>
<evidence type="ECO:0000255" key="1">
    <source>
        <dbReference type="HAMAP-Rule" id="MF_00693"/>
    </source>
</evidence>
<organism>
    <name type="scientific">Chelativorans sp. (strain BNC1)</name>
    <dbReference type="NCBI Taxonomy" id="266779"/>
    <lineage>
        <taxon>Bacteria</taxon>
        <taxon>Pseudomonadati</taxon>
        <taxon>Pseudomonadota</taxon>
        <taxon>Alphaproteobacteria</taxon>
        <taxon>Hyphomicrobiales</taxon>
        <taxon>Phyllobacteriaceae</taxon>
        <taxon>Chelativorans</taxon>
    </lineage>
</organism>
<dbReference type="EMBL" id="CP000390">
    <property type="protein sequence ID" value="ABG64564.1"/>
    <property type="molecule type" value="Genomic_DNA"/>
</dbReference>
<dbReference type="SMR" id="Q11DG1"/>
<dbReference type="STRING" id="266779.Meso_3192"/>
<dbReference type="KEGG" id="mes:Meso_3192"/>
<dbReference type="eggNOG" id="COG0217">
    <property type="taxonomic scope" value="Bacteria"/>
</dbReference>
<dbReference type="HOGENOM" id="CLU_062974_2_2_5"/>
<dbReference type="OrthoDB" id="9781053at2"/>
<dbReference type="GO" id="GO:0005829">
    <property type="term" value="C:cytosol"/>
    <property type="evidence" value="ECO:0007669"/>
    <property type="project" value="TreeGrafter"/>
</dbReference>
<dbReference type="GO" id="GO:0003677">
    <property type="term" value="F:DNA binding"/>
    <property type="evidence" value="ECO:0007669"/>
    <property type="project" value="UniProtKB-UniRule"/>
</dbReference>
<dbReference type="GO" id="GO:0006355">
    <property type="term" value="P:regulation of DNA-templated transcription"/>
    <property type="evidence" value="ECO:0007669"/>
    <property type="project" value="UniProtKB-UniRule"/>
</dbReference>
<dbReference type="FunFam" id="1.10.10.200:FF:000002">
    <property type="entry name" value="Probable transcriptional regulatory protein CLM62_37755"/>
    <property type="match status" value="1"/>
</dbReference>
<dbReference type="Gene3D" id="1.10.10.200">
    <property type="match status" value="1"/>
</dbReference>
<dbReference type="Gene3D" id="3.30.70.980">
    <property type="match status" value="2"/>
</dbReference>
<dbReference type="HAMAP" id="MF_00693">
    <property type="entry name" value="Transcrip_reg_TACO1"/>
    <property type="match status" value="1"/>
</dbReference>
<dbReference type="InterPro" id="IPR017856">
    <property type="entry name" value="Integrase-like_N"/>
</dbReference>
<dbReference type="InterPro" id="IPR048300">
    <property type="entry name" value="TACO1_YebC-like_2nd/3rd_dom"/>
</dbReference>
<dbReference type="InterPro" id="IPR049083">
    <property type="entry name" value="TACO1_YebC_N"/>
</dbReference>
<dbReference type="InterPro" id="IPR002876">
    <property type="entry name" value="Transcrip_reg_TACO1-like"/>
</dbReference>
<dbReference type="InterPro" id="IPR026564">
    <property type="entry name" value="Transcrip_reg_TACO1-like_dom3"/>
</dbReference>
<dbReference type="InterPro" id="IPR029072">
    <property type="entry name" value="YebC-like"/>
</dbReference>
<dbReference type="NCBIfam" id="NF001030">
    <property type="entry name" value="PRK00110.1"/>
    <property type="match status" value="1"/>
</dbReference>
<dbReference type="NCBIfam" id="NF009044">
    <property type="entry name" value="PRK12378.1"/>
    <property type="match status" value="1"/>
</dbReference>
<dbReference type="NCBIfam" id="TIGR01033">
    <property type="entry name" value="YebC/PmpR family DNA-binding transcriptional regulator"/>
    <property type="match status" value="1"/>
</dbReference>
<dbReference type="PANTHER" id="PTHR12532:SF6">
    <property type="entry name" value="TRANSCRIPTIONAL REGULATORY PROTEIN YEBC-RELATED"/>
    <property type="match status" value="1"/>
</dbReference>
<dbReference type="PANTHER" id="PTHR12532">
    <property type="entry name" value="TRANSLATIONAL ACTIVATOR OF CYTOCHROME C OXIDASE 1"/>
    <property type="match status" value="1"/>
</dbReference>
<dbReference type="Pfam" id="PF20772">
    <property type="entry name" value="TACO1_YebC_N"/>
    <property type="match status" value="1"/>
</dbReference>
<dbReference type="Pfam" id="PF01709">
    <property type="entry name" value="Transcrip_reg"/>
    <property type="match status" value="1"/>
</dbReference>
<dbReference type="SUPFAM" id="SSF75625">
    <property type="entry name" value="YebC-like"/>
    <property type="match status" value="1"/>
</dbReference>
<reference key="1">
    <citation type="submission" date="2006-06" db="EMBL/GenBank/DDBJ databases">
        <title>Complete sequence of chromosome of Mesorhizobium sp. BNC1.</title>
        <authorList>
            <consortium name="US DOE Joint Genome Institute"/>
            <person name="Copeland A."/>
            <person name="Lucas S."/>
            <person name="Lapidus A."/>
            <person name="Barry K."/>
            <person name="Detter J.C."/>
            <person name="Glavina del Rio T."/>
            <person name="Hammon N."/>
            <person name="Israni S."/>
            <person name="Dalin E."/>
            <person name="Tice H."/>
            <person name="Pitluck S."/>
            <person name="Chertkov O."/>
            <person name="Brettin T."/>
            <person name="Bruce D."/>
            <person name="Han C."/>
            <person name="Tapia R."/>
            <person name="Gilna P."/>
            <person name="Schmutz J."/>
            <person name="Larimer F."/>
            <person name="Land M."/>
            <person name="Hauser L."/>
            <person name="Kyrpides N."/>
            <person name="Mikhailova N."/>
            <person name="Richardson P."/>
        </authorList>
    </citation>
    <scope>NUCLEOTIDE SEQUENCE [LARGE SCALE GENOMIC DNA]</scope>
    <source>
        <strain>BNC1</strain>
    </source>
</reference>
<comment type="subcellular location">
    <subcellularLocation>
        <location evidence="1">Cytoplasm</location>
    </subcellularLocation>
</comment>
<comment type="similarity">
    <text evidence="1">Belongs to the TACO1 family.</text>
</comment>
<protein>
    <recommendedName>
        <fullName evidence="1">Probable transcriptional regulatory protein Meso_3192</fullName>
    </recommendedName>
</protein>
<proteinExistence type="inferred from homology"/>